<name>RIBL_META3</name>
<comment type="function">
    <text evidence="1">Catalyzes the transfer of the AMP portion of ATP to flavin mononucleotide (FMN) to produce flavin adenine dinucleotide (FAD) coenzyme.</text>
</comment>
<comment type="catalytic activity">
    <reaction evidence="1">
        <text>FMN + ATP + H(+) = FAD + diphosphate</text>
        <dbReference type="Rhea" id="RHEA:17237"/>
        <dbReference type="ChEBI" id="CHEBI:15378"/>
        <dbReference type="ChEBI" id="CHEBI:30616"/>
        <dbReference type="ChEBI" id="CHEBI:33019"/>
        <dbReference type="ChEBI" id="CHEBI:57692"/>
        <dbReference type="ChEBI" id="CHEBI:58210"/>
        <dbReference type="EC" id="2.7.7.2"/>
    </reaction>
</comment>
<comment type="cofactor">
    <cofactor evidence="1">
        <name>a divalent metal cation</name>
        <dbReference type="ChEBI" id="CHEBI:60240"/>
    </cofactor>
</comment>
<comment type="pathway">
    <text evidence="1">Cofactor biosynthesis; FAD biosynthesis; FAD from FMN: step 1/1.</text>
</comment>
<comment type="subunit">
    <text evidence="1">Homodimer.</text>
</comment>
<comment type="similarity">
    <text evidence="1">Belongs to the archaeal FAD synthase family.</text>
</comment>
<sequence>MKTNDKTKKIVLTAGTFDLLHPGHHNTLKYAKSLGDELIVVIARDETVKKIKGRKPVIPENQRREMIEAIKPVDKAILGSLTDKLEPILKIKPDIIVLGPDQITFDAENLKNELKKLGLDVEIVKTKEYTNCDFHSSYDIIKEIVKRWCNKKIIKK</sequence>
<feature type="chain" id="PRO_0000406253" description="FAD synthase">
    <location>
        <begin position="1"/>
        <end position="156"/>
    </location>
</feature>
<feature type="binding site" evidence="1">
    <location>
        <begin position="16"/>
        <end position="17"/>
    </location>
    <ligand>
        <name>ATP</name>
        <dbReference type="ChEBI" id="CHEBI:30616"/>
    </ligand>
</feature>
<feature type="binding site" evidence="1">
    <location>
        <begin position="21"/>
        <end position="24"/>
    </location>
    <ligand>
        <name>ATP</name>
        <dbReference type="ChEBI" id="CHEBI:30616"/>
    </ligand>
</feature>
<feature type="binding site" evidence="1">
    <location>
        <position position="101"/>
    </location>
    <ligand>
        <name>ATP</name>
        <dbReference type="ChEBI" id="CHEBI:30616"/>
    </ligand>
</feature>
<feature type="binding site" evidence="1">
    <location>
        <position position="129"/>
    </location>
    <ligand>
        <name>ATP</name>
        <dbReference type="ChEBI" id="CHEBI:30616"/>
    </ligand>
</feature>
<protein>
    <recommendedName>
        <fullName evidence="1">FAD synthase</fullName>
        <ecNumber evidence="1">2.7.7.2</ecNumber>
    </recommendedName>
    <alternativeName>
        <fullName evidence="1">FMN adenylyltransferase</fullName>
    </alternativeName>
    <alternativeName>
        <fullName evidence="1">Flavin adenine dinucleotide synthase</fullName>
    </alternativeName>
</protein>
<keyword id="KW-0067">ATP-binding</keyword>
<keyword id="KW-0274">FAD</keyword>
<keyword id="KW-0285">Flavoprotein</keyword>
<keyword id="KW-0288">FMN</keyword>
<keyword id="KW-0547">Nucleotide-binding</keyword>
<keyword id="KW-0548">Nucleotidyltransferase</keyword>
<keyword id="KW-0808">Transferase</keyword>
<organism>
    <name type="scientific">Methanococcus aeolicus (strain ATCC BAA-1280 / DSM 17508 / OCM 812 / Nankai-3)</name>
    <dbReference type="NCBI Taxonomy" id="419665"/>
    <lineage>
        <taxon>Archaea</taxon>
        <taxon>Methanobacteriati</taxon>
        <taxon>Methanobacteriota</taxon>
        <taxon>Methanomada group</taxon>
        <taxon>Methanococci</taxon>
        <taxon>Methanococcales</taxon>
        <taxon>Methanococcaceae</taxon>
        <taxon>Methanococcus</taxon>
    </lineage>
</organism>
<reference key="1">
    <citation type="submission" date="2007-06" db="EMBL/GenBank/DDBJ databases">
        <title>Complete sequence of Methanococcus aeolicus Nankai-3.</title>
        <authorList>
            <consortium name="US DOE Joint Genome Institute"/>
            <person name="Copeland A."/>
            <person name="Lucas S."/>
            <person name="Lapidus A."/>
            <person name="Barry K."/>
            <person name="Glavina del Rio T."/>
            <person name="Dalin E."/>
            <person name="Tice H."/>
            <person name="Pitluck S."/>
            <person name="Chain P."/>
            <person name="Malfatti S."/>
            <person name="Shin M."/>
            <person name="Vergez L."/>
            <person name="Schmutz J."/>
            <person name="Larimer F."/>
            <person name="Land M."/>
            <person name="Hauser L."/>
            <person name="Kyrpides N."/>
            <person name="Lykidis A."/>
            <person name="Sieprawska-Lupa M."/>
            <person name="Whitman W.B."/>
            <person name="Richardson P."/>
        </authorList>
    </citation>
    <scope>NUCLEOTIDE SEQUENCE [LARGE SCALE GENOMIC DNA]</scope>
    <source>
        <strain>ATCC BAA-1280 / DSM 17508 / OCM 812 / Nankai-3</strain>
    </source>
</reference>
<evidence type="ECO:0000255" key="1">
    <source>
        <dbReference type="HAMAP-Rule" id="MF_02115"/>
    </source>
</evidence>
<accession>A6UWK8</accession>
<dbReference type="EC" id="2.7.7.2" evidence="1"/>
<dbReference type="EMBL" id="CP000743">
    <property type="protein sequence ID" value="ABR56880.1"/>
    <property type="molecule type" value="Genomic_DNA"/>
</dbReference>
<dbReference type="RefSeq" id="WP_011974012.1">
    <property type="nucleotide sequence ID" value="NC_009635.1"/>
</dbReference>
<dbReference type="SMR" id="A6UWK8"/>
<dbReference type="STRING" id="419665.Maeo_1304"/>
<dbReference type="GeneID" id="5326488"/>
<dbReference type="KEGG" id="mae:Maeo_1304"/>
<dbReference type="eggNOG" id="arCOG01222">
    <property type="taxonomic scope" value="Archaea"/>
</dbReference>
<dbReference type="HOGENOM" id="CLU_034585_2_1_2"/>
<dbReference type="OrthoDB" id="1912at2157"/>
<dbReference type="UniPathway" id="UPA00277">
    <property type="reaction ID" value="UER00407"/>
</dbReference>
<dbReference type="Proteomes" id="UP000001106">
    <property type="component" value="Chromosome"/>
</dbReference>
<dbReference type="GO" id="GO:0005524">
    <property type="term" value="F:ATP binding"/>
    <property type="evidence" value="ECO:0007669"/>
    <property type="project" value="UniProtKB-UniRule"/>
</dbReference>
<dbReference type="GO" id="GO:0003919">
    <property type="term" value="F:FMN adenylyltransferase activity"/>
    <property type="evidence" value="ECO:0007669"/>
    <property type="project" value="UniProtKB-UniRule"/>
</dbReference>
<dbReference type="GO" id="GO:0006747">
    <property type="term" value="P:FAD biosynthetic process"/>
    <property type="evidence" value="ECO:0007669"/>
    <property type="project" value="UniProtKB-UniRule"/>
</dbReference>
<dbReference type="GO" id="GO:0046444">
    <property type="term" value="P:FMN metabolic process"/>
    <property type="evidence" value="ECO:0007669"/>
    <property type="project" value="UniProtKB-UniRule"/>
</dbReference>
<dbReference type="CDD" id="cd02170">
    <property type="entry name" value="cytidylyltransferase"/>
    <property type="match status" value="1"/>
</dbReference>
<dbReference type="Gene3D" id="3.40.50.620">
    <property type="entry name" value="HUPs"/>
    <property type="match status" value="1"/>
</dbReference>
<dbReference type="HAMAP" id="MF_02115">
    <property type="entry name" value="FAD_synth_arch"/>
    <property type="match status" value="1"/>
</dbReference>
<dbReference type="InterPro" id="IPR050385">
    <property type="entry name" value="Archaeal_FAD_synthase"/>
</dbReference>
<dbReference type="InterPro" id="IPR004821">
    <property type="entry name" value="Cyt_trans-like"/>
</dbReference>
<dbReference type="InterPro" id="IPR024902">
    <property type="entry name" value="FAD_synth_RibL"/>
</dbReference>
<dbReference type="InterPro" id="IPR014729">
    <property type="entry name" value="Rossmann-like_a/b/a_fold"/>
</dbReference>
<dbReference type="NCBIfam" id="TIGR00125">
    <property type="entry name" value="cyt_tran_rel"/>
    <property type="match status" value="1"/>
</dbReference>
<dbReference type="PANTHER" id="PTHR43793">
    <property type="entry name" value="FAD SYNTHASE"/>
    <property type="match status" value="1"/>
</dbReference>
<dbReference type="PANTHER" id="PTHR43793:SF1">
    <property type="entry name" value="FAD SYNTHASE"/>
    <property type="match status" value="1"/>
</dbReference>
<dbReference type="Pfam" id="PF01467">
    <property type="entry name" value="CTP_transf_like"/>
    <property type="match status" value="1"/>
</dbReference>
<dbReference type="SUPFAM" id="SSF52374">
    <property type="entry name" value="Nucleotidylyl transferase"/>
    <property type="match status" value="1"/>
</dbReference>
<gene>
    <name evidence="1" type="primary">ribL</name>
    <name type="ordered locus">Maeo_1304</name>
</gene>
<proteinExistence type="inferred from homology"/>